<reference key="1">
    <citation type="journal article" date="2007" name="PLoS ONE">
        <title>Genome sequencing shows that European isolates of Francisella tularensis subspecies tularensis are almost identical to US laboratory strain Schu S4.</title>
        <authorList>
            <person name="Chaudhuri R.R."/>
            <person name="Ren C.-P."/>
            <person name="Desmond L."/>
            <person name="Vincent G.A."/>
            <person name="Silman N.J."/>
            <person name="Brehm J.K."/>
            <person name="Elmore M.J."/>
            <person name="Hudson M.J."/>
            <person name="Forsman M."/>
            <person name="Isherwood K.E."/>
            <person name="Gurycova D."/>
            <person name="Minton N.P."/>
            <person name="Titball R.W."/>
            <person name="Pallen M.J."/>
            <person name="Vipond R."/>
        </authorList>
    </citation>
    <scope>NUCLEOTIDE SEQUENCE [LARGE SCALE GENOMIC DNA]</scope>
    <source>
        <strain>FSC 198</strain>
    </source>
</reference>
<gene>
    <name evidence="1" type="primary">hisS</name>
    <name type="ordered locus">FTF0052</name>
</gene>
<organism>
    <name type="scientific">Francisella tularensis subsp. tularensis (strain FSC 198)</name>
    <dbReference type="NCBI Taxonomy" id="393115"/>
    <lineage>
        <taxon>Bacteria</taxon>
        <taxon>Pseudomonadati</taxon>
        <taxon>Pseudomonadota</taxon>
        <taxon>Gammaproteobacteria</taxon>
        <taxon>Thiotrichales</taxon>
        <taxon>Francisellaceae</taxon>
        <taxon>Francisella</taxon>
    </lineage>
</organism>
<proteinExistence type="inferred from homology"/>
<comment type="catalytic activity">
    <reaction evidence="1">
        <text>tRNA(His) + L-histidine + ATP = L-histidyl-tRNA(His) + AMP + diphosphate + H(+)</text>
        <dbReference type="Rhea" id="RHEA:17313"/>
        <dbReference type="Rhea" id="RHEA-COMP:9665"/>
        <dbReference type="Rhea" id="RHEA-COMP:9689"/>
        <dbReference type="ChEBI" id="CHEBI:15378"/>
        <dbReference type="ChEBI" id="CHEBI:30616"/>
        <dbReference type="ChEBI" id="CHEBI:33019"/>
        <dbReference type="ChEBI" id="CHEBI:57595"/>
        <dbReference type="ChEBI" id="CHEBI:78442"/>
        <dbReference type="ChEBI" id="CHEBI:78527"/>
        <dbReference type="ChEBI" id="CHEBI:456215"/>
        <dbReference type="EC" id="6.1.1.21"/>
    </reaction>
</comment>
<comment type="subunit">
    <text evidence="1">Homodimer.</text>
</comment>
<comment type="subcellular location">
    <subcellularLocation>
        <location evidence="1">Cytoplasm</location>
    </subcellularLocation>
</comment>
<comment type="similarity">
    <text evidence="1">Belongs to the class-II aminoacyl-tRNA synthetase family.</text>
</comment>
<protein>
    <recommendedName>
        <fullName evidence="1">Histidine--tRNA ligase</fullName>
        <ecNumber evidence="1">6.1.1.21</ecNumber>
    </recommendedName>
    <alternativeName>
        <fullName evidence="1">Histidyl-tRNA synthetase</fullName>
        <shortName evidence="1">HisRS</shortName>
    </alternativeName>
</protein>
<sequence>MSKLTIVRGFNDVLPLDSYKWQLLESKVKLILDRYNYSETRLPIVERSELFHRSVGESSDIVSKETYDFQDRNGDSLTLRPEGTAGCVRMVIENNLATRGQTQKLWYCGPMFRYERPQKGRYRQFYQLGVEAYGFDGIAIDLEVIAIAWSLFKELGIYEYVTLELNSLGSSLNRQEYTQALLQYLKPYHAELDEDSIKRLDKNPLRILDSKIEKTQKILANAPKLIDFIDHDLRLRFKQTCQYLDALGVRYKLNENLVRGLDYYTGLVFEWTTDKLGSQSAICAGGRYDGLVENLGGQKTAAIGFAIGMERLLLLLEDLGKLPNQDNACDVFFILDSAQLHQSLAIVENIRQELPQLKIDMDLKFGSFKSQFKKADKSGAKVAIIIGQDELDNGFAGIKFLQQNEEQQQVAFNELINFLER</sequence>
<feature type="chain" id="PRO_1000016360" description="Histidine--tRNA ligase">
    <location>
        <begin position="1"/>
        <end position="421"/>
    </location>
</feature>
<dbReference type="EC" id="6.1.1.21" evidence="1"/>
<dbReference type="EMBL" id="AM286280">
    <property type="protein sequence ID" value="CAL08068.1"/>
    <property type="molecule type" value="Genomic_DNA"/>
</dbReference>
<dbReference type="RefSeq" id="WP_003019740.1">
    <property type="nucleotide sequence ID" value="NC_008245.1"/>
</dbReference>
<dbReference type="SMR" id="Q14K18"/>
<dbReference type="KEGG" id="ftf:FTF0052"/>
<dbReference type="HOGENOM" id="CLU_025113_1_1_6"/>
<dbReference type="GO" id="GO:0005737">
    <property type="term" value="C:cytoplasm"/>
    <property type="evidence" value="ECO:0007669"/>
    <property type="project" value="UniProtKB-SubCell"/>
</dbReference>
<dbReference type="GO" id="GO:0005524">
    <property type="term" value="F:ATP binding"/>
    <property type="evidence" value="ECO:0007669"/>
    <property type="project" value="UniProtKB-UniRule"/>
</dbReference>
<dbReference type="GO" id="GO:0004821">
    <property type="term" value="F:histidine-tRNA ligase activity"/>
    <property type="evidence" value="ECO:0007669"/>
    <property type="project" value="UniProtKB-UniRule"/>
</dbReference>
<dbReference type="GO" id="GO:0006427">
    <property type="term" value="P:histidyl-tRNA aminoacylation"/>
    <property type="evidence" value="ECO:0007669"/>
    <property type="project" value="UniProtKB-UniRule"/>
</dbReference>
<dbReference type="CDD" id="cd00773">
    <property type="entry name" value="HisRS-like_core"/>
    <property type="match status" value="1"/>
</dbReference>
<dbReference type="FunFam" id="3.30.930.10:FF:000005">
    <property type="entry name" value="Histidine--tRNA ligase"/>
    <property type="match status" value="1"/>
</dbReference>
<dbReference type="Gene3D" id="3.40.50.800">
    <property type="entry name" value="Anticodon-binding domain"/>
    <property type="match status" value="1"/>
</dbReference>
<dbReference type="Gene3D" id="3.30.930.10">
    <property type="entry name" value="Bira Bifunctional Protein, Domain 2"/>
    <property type="match status" value="1"/>
</dbReference>
<dbReference type="HAMAP" id="MF_00127">
    <property type="entry name" value="His_tRNA_synth"/>
    <property type="match status" value="1"/>
</dbReference>
<dbReference type="InterPro" id="IPR006195">
    <property type="entry name" value="aa-tRNA-synth_II"/>
</dbReference>
<dbReference type="InterPro" id="IPR045864">
    <property type="entry name" value="aa-tRNA-synth_II/BPL/LPL"/>
</dbReference>
<dbReference type="InterPro" id="IPR004154">
    <property type="entry name" value="Anticodon-bd"/>
</dbReference>
<dbReference type="InterPro" id="IPR036621">
    <property type="entry name" value="Anticodon-bd_dom_sf"/>
</dbReference>
<dbReference type="InterPro" id="IPR015807">
    <property type="entry name" value="His-tRNA-ligase"/>
</dbReference>
<dbReference type="InterPro" id="IPR041715">
    <property type="entry name" value="HisRS-like_core"/>
</dbReference>
<dbReference type="InterPro" id="IPR004516">
    <property type="entry name" value="HisRS/HisZ"/>
</dbReference>
<dbReference type="NCBIfam" id="TIGR00442">
    <property type="entry name" value="hisS"/>
    <property type="match status" value="1"/>
</dbReference>
<dbReference type="PANTHER" id="PTHR43707:SF1">
    <property type="entry name" value="HISTIDINE--TRNA LIGASE, MITOCHONDRIAL-RELATED"/>
    <property type="match status" value="1"/>
</dbReference>
<dbReference type="PANTHER" id="PTHR43707">
    <property type="entry name" value="HISTIDYL-TRNA SYNTHETASE"/>
    <property type="match status" value="1"/>
</dbReference>
<dbReference type="Pfam" id="PF03129">
    <property type="entry name" value="HGTP_anticodon"/>
    <property type="match status" value="1"/>
</dbReference>
<dbReference type="Pfam" id="PF13393">
    <property type="entry name" value="tRNA-synt_His"/>
    <property type="match status" value="1"/>
</dbReference>
<dbReference type="PIRSF" id="PIRSF001549">
    <property type="entry name" value="His-tRNA_synth"/>
    <property type="match status" value="1"/>
</dbReference>
<dbReference type="SUPFAM" id="SSF52954">
    <property type="entry name" value="Class II aaRS ABD-related"/>
    <property type="match status" value="1"/>
</dbReference>
<dbReference type="SUPFAM" id="SSF55681">
    <property type="entry name" value="Class II aaRS and biotin synthetases"/>
    <property type="match status" value="1"/>
</dbReference>
<dbReference type="PROSITE" id="PS50862">
    <property type="entry name" value="AA_TRNA_LIGASE_II"/>
    <property type="match status" value="1"/>
</dbReference>
<keyword id="KW-0030">Aminoacyl-tRNA synthetase</keyword>
<keyword id="KW-0067">ATP-binding</keyword>
<keyword id="KW-0963">Cytoplasm</keyword>
<keyword id="KW-0436">Ligase</keyword>
<keyword id="KW-0547">Nucleotide-binding</keyword>
<keyword id="KW-0648">Protein biosynthesis</keyword>
<accession>Q14K18</accession>
<evidence type="ECO:0000255" key="1">
    <source>
        <dbReference type="HAMAP-Rule" id="MF_00127"/>
    </source>
</evidence>
<name>SYH_FRAT1</name>